<reference key="1">
    <citation type="journal article" date="2008" name="J. Bacteriol.">
        <title>Insights into the environmental resistance gene pool from the genome sequence of the multidrug-resistant environmental isolate Escherichia coli SMS-3-5.</title>
        <authorList>
            <person name="Fricke W.F."/>
            <person name="Wright M.S."/>
            <person name="Lindell A.H."/>
            <person name="Harkins D.M."/>
            <person name="Baker-Austin C."/>
            <person name="Ravel J."/>
            <person name="Stepanauskas R."/>
        </authorList>
    </citation>
    <scope>NUCLEOTIDE SEQUENCE [LARGE SCALE GENOMIC DNA]</scope>
    <source>
        <strain>SMS-3-5 / SECEC</strain>
    </source>
</reference>
<gene>
    <name evidence="1" type="primary">pepA</name>
    <name type="ordered locus">EcSMS35_4740</name>
</gene>
<name>AMPA_ECOSM</name>
<organism>
    <name type="scientific">Escherichia coli (strain SMS-3-5 / SECEC)</name>
    <dbReference type="NCBI Taxonomy" id="439855"/>
    <lineage>
        <taxon>Bacteria</taxon>
        <taxon>Pseudomonadati</taxon>
        <taxon>Pseudomonadota</taxon>
        <taxon>Gammaproteobacteria</taxon>
        <taxon>Enterobacterales</taxon>
        <taxon>Enterobacteriaceae</taxon>
        <taxon>Escherichia</taxon>
    </lineage>
</organism>
<protein>
    <recommendedName>
        <fullName evidence="1">Probable cytosol aminopeptidase</fullName>
        <ecNumber evidence="1">3.4.11.1</ecNumber>
    </recommendedName>
    <alternativeName>
        <fullName evidence="1">Leucine aminopeptidase</fullName>
        <shortName evidence="1">LAP</shortName>
        <ecNumber evidence="1">3.4.11.10</ecNumber>
    </alternativeName>
    <alternativeName>
        <fullName evidence="1">Leucyl aminopeptidase</fullName>
    </alternativeName>
</protein>
<evidence type="ECO:0000255" key="1">
    <source>
        <dbReference type="HAMAP-Rule" id="MF_00181"/>
    </source>
</evidence>
<sequence>MEFSVKSGSPEKQRSACIVVGVFEPRRLSPIAEQLDKISDGYISALLRRGELEGKPGQTLLLHHVPNVLSERILLIGCGKERELDERQYKQVIQKTINTLNDTGSMEAVCFLTELHVKGRNNYWKVRQAVETAKETLYSFDQLKTNKSEPRRPLRKMVFNVPTRRELTSGERAIQHGLAIAAGIKAAKDLGNMPPNICNAAYLASQARQLADSYSKNVITRVIGEQQMKELGMHSYLAVGQGSQNESLMSVIEYKGNASEDARPIVLVGKGLTFDSGGISIKPSEGMDEMKYDMCGAAAVYGVMRMVAELQLPINVIGVLAGCENMPGGRAYRPGDVLTTMSGQTVEVLNTDAEGRLVLCDVLTYVERFEPEAVIDVATLTGACVIALGHHITGLMANHNPLAHELIAASEQSGDRAWRLPLGDEYQEQLESNFADMANIGGRPGGAITAGCFLSRFTRKYNWAHLDIAGTAWRSGKAKGATGRPVALLAQFLLNRAGFNGEE</sequence>
<accession>B1LRE5</accession>
<proteinExistence type="inferred from homology"/>
<feature type="chain" id="PRO_1000118456" description="Probable cytosol aminopeptidase">
    <location>
        <begin position="1"/>
        <end position="503"/>
    </location>
</feature>
<feature type="active site" evidence="1">
    <location>
        <position position="282"/>
    </location>
</feature>
<feature type="active site" evidence="1">
    <location>
        <position position="356"/>
    </location>
</feature>
<feature type="binding site" evidence="1">
    <location>
        <position position="270"/>
    </location>
    <ligand>
        <name>Mn(2+)</name>
        <dbReference type="ChEBI" id="CHEBI:29035"/>
        <label>2</label>
    </ligand>
</feature>
<feature type="binding site" evidence="1">
    <location>
        <position position="275"/>
    </location>
    <ligand>
        <name>Mn(2+)</name>
        <dbReference type="ChEBI" id="CHEBI:29035"/>
        <label>1</label>
    </ligand>
</feature>
<feature type="binding site" evidence="1">
    <location>
        <position position="275"/>
    </location>
    <ligand>
        <name>Mn(2+)</name>
        <dbReference type="ChEBI" id="CHEBI:29035"/>
        <label>2</label>
    </ligand>
</feature>
<feature type="binding site" evidence="1">
    <location>
        <position position="293"/>
    </location>
    <ligand>
        <name>Mn(2+)</name>
        <dbReference type="ChEBI" id="CHEBI:29035"/>
        <label>2</label>
    </ligand>
</feature>
<feature type="binding site" evidence="1">
    <location>
        <position position="352"/>
    </location>
    <ligand>
        <name>Mn(2+)</name>
        <dbReference type="ChEBI" id="CHEBI:29035"/>
        <label>1</label>
    </ligand>
</feature>
<feature type="binding site" evidence="1">
    <location>
        <position position="354"/>
    </location>
    <ligand>
        <name>Mn(2+)</name>
        <dbReference type="ChEBI" id="CHEBI:29035"/>
        <label>1</label>
    </ligand>
</feature>
<feature type="binding site" evidence="1">
    <location>
        <position position="354"/>
    </location>
    <ligand>
        <name>Mn(2+)</name>
        <dbReference type="ChEBI" id="CHEBI:29035"/>
        <label>2</label>
    </ligand>
</feature>
<keyword id="KW-0031">Aminopeptidase</keyword>
<keyword id="KW-0963">Cytoplasm</keyword>
<keyword id="KW-0378">Hydrolase</keyword>
<keyword id="KW-0464">Manganese</keyword>
<keyword id="KW-0479">Metal-binding</keyword>
<keyword id="KW-0645">Protease</keyword>
<comment type="function">
    <text evidence="1">Presumably involved in the processing and regular turnover of intracellular proteins. Catalyzes the removal of unsubstituted N-terminal amino acids from various peptides.</text>
</comment>
<comment type="catalytic activity">
    <reaction evidence="1">
        <text>Release of an N-terminal amino acid, Xaa-|-Yaa-, in which Xaa is preferably Leu, but may be other amino acids including Pro although not Arg or Lys, and Yaa may be Pro. Amino acid amides and methyl esters are also readily hydrolyzed, but rates on arylamides are exceedingly low.</text>
        <dbReference type="EC" id="3.4.11.1"/>
    </reaction>
</comment>
<comment type="catalytic activity">
    <reaction evidence="1">
        <text>Release of an N-terminal amino acid, preferentially leucine, but not glutamic or aspartic acids.</text>
        <dbReference type="EC" id="3.4.11.10"/>
    </reaction>
</comment>
<comment type="cofactor">
    <cofactor evidence="1">
        <name>Mn(2+)</name>
        <dbReference type="ChEBI" id="CHEBI:29035"/>
    </cofactor>
    <text evidence="1">Binds 2 manganese ions per subunit.</text>
</comment>
<comment type="subcellular location">
    <subcellularLocation>
        <location evidence="1">Cytoplasm</location>
    </subcellularLocation>
</comment>
<comment type="similarity">
    <text evidence="1">Belongs to the peptidase M17 family.</text>
</comment>
<dbReference type="EC" id="3.4.11.1" evidence="1"/>
<dbReference type="EC" id="3.4.11.10" evidence="1"/>
<dbReference type="EMBL" id="CP000970">
    <property type="protein sequence ID" value="ACB17875.1"/>
    <property type="molecule type" value="Genomic_DNA"/>
</dbReference>
<dbReference type="RefSeq" id="WP_000397144.1">
    <property type="nucleotide sequence ID" value="NC_010498.1"/>
</dbReference>
<dbReference type="SMR" id="B1LRE5"/>
<dbReference type="MEROPS" id="M17.003"/>
<dbReference type="GeneID" id="93777558"/>
<dbReference type="KEGG" id="ecm:EcSMS35_4740"/>
<dbReference type="HOGENOM" id="CLU_013734_2_2_6"/>
<dbReference type="Proteomes" id="UP000007011">
    <property type="component" value="Chromosome"/>
</dbReference>
<dbReference type="GO" id="GO:0005737">
    <property type="term" value="C:cytoplasm"/>
    <property type="evidence" value="ECO:0007669"/>
    <property type="project" value="UniProtKB-SubCell"/>
</dbReference>
<dbReference type="GO" id="GO:0030145">
    <property type="term" value="F:manganese ion binding"/>
    <property type="evidence" value="ECO:0007669"/>
    <property type="project" value="UniProtKB-UniRule"/>
</dbReference>
<dbReference type="GO" id="GO:0070006">
    <property type="term" value="F:metalloaminopeptidase activity"/>
    <property type="evidence" value="ECO:0007669"/>
    <property type="project" value="InterPro"/>
</dbReference>
<dbReference type="GO" id="GO:0006508">
    <property type="term" value="P:proteolysis"/>
    <property type="evidence" value="ECO:0007669"/>
    <property type="project" value="UniProtKB-KW"/>
</dbReference>
<dbReference type="CDD" id="cd00433">
    <property type="entry name" value="Peptidase_M17"/>
    <property type="match status" value="1"/>
</dbReference>
<dbReference type="FunFam" id="3.40.220.10:FF:000001">
    <property type="entry name" value="Probable cytosol aminopeptidase"/>
    <property type="match status" value="1"/>
</dbReference>
<dbReference type="FunFam" id="3.40.630.10:FF:000004">
    <property type="entry name" value="Probable cytosol aminopeptidase"/>
    <property type="match status" value="1"/>
</dbReference>
<dbReference type="Gene3D" id="3.40.220.10">
    <property type="entry name" value="Leucine Aminopeptidase, subunit E, domain 1"/>
    <property type="match status" value="1"/>
</dbReference>
<dbReference type="Gene3D" id="3.40.630.10">
    <property type="entry name" value="Zn peptidases"/>
    <property type="match status" value="1"/>
</dbReference>
<dbReference type="HAMAP" id="MF_00181">
    <property type="entry name" value="Cytosol_peptidase_M17"/>
    <property type="match status" value="1"/>
</dbReference>
<dbReference type="InterPro" id="IPR011356">
    <property type="entry name" value="Leucine_aapep/pepB"/>
</dbReference>
<dbReference type="InterPro" id="IPR043472">
    <property type="entry name" value="Macro_dom-like"/>
</dbReference>
<dbReference type="InterPro" id="IPR000819">
    <property type="entry name" value="Peptidase_M17_C"/>
</dbReference>
<dbReference type="InterPro" id="IPR023042">
    <property type="entry name" value="Peptidase_M17_leu_NH2_pept"/>
</dbReference>
<dbReference type="InterPro" id="IPR008283">
    <property type="entry name" value="Peptidase_M17_N"/>
</dbReference>
<dbReference type="NCBIfam" id="NF002072">
    <property type="entry name" value="PRK00913.1-1"/>
    <property type="match status" value="1"/>
</dbReference>
<dbReference type="NCBIfam" id="NF002073">
    <property type="entry name" value="PRK00913.1-2"/>
    <property type="match status" value="1"/>
</dbReference>
<dbReference type="NCBIfam" id="NF002074">
    <property type="entry name" value="PRK00913.1-4"/>
    <property type="match status" value="1"/>
</dbReference>
<dbReference type="PANTHER" id="PTHR11963:SF23">
    <property type="entry name" value="CYTOSOL AMINOPEPTIDASE"/>
    <property type="match status" value="1"/>
</dbReference>
<dbReference type="PANTHER" id="PTHR11963">
    <property type="entry name" value="LEUCINE AMINOPEPTIDASE-RELATED"/>
    <property type="match status" value="1"/>
</dbReference>
<dbReference type="Pfam" id="PF00883">
    <property type="entry name" value="Peptidase_M17"/>
    <property type="match status" value="1"/>
</dbReference>
<dbReference type="Pfam" id="PF02789">
    <property type="entry name" value="Peptidase_M17_N"/>
    <property type="match status" value="1"/>
</dbReference>
<dbReference type="PRINTS" id="PR00481">
    <property type="entry name" value="LAMNOPPTDASE"/>
</dbReference>
<dbReference type="SUPFAM" id="SSF52949">
    <property type="entry name" value="Macro domain-like"/>
    <property type="match status" value="1"/>
</dbReference>
<dbReference type="SUPFAM" id="SSF53187">
    <property type="entry name" value="Zn-dependent exopeptidases"/>
    <property type="match status" value="1"/>
</dbReference>
<dbReference type="PROSITE" id="PS00631">
    <property type="entry name" value="CYTOSOL_AP"/>
    <property type="match status" value="1"/>
</dbReference>